<gene>
    <name type="primary">SRV2</name>
    <name type="synonym">CAP1</name>
    <name type="ordered locus">YNL138W</name>
    <name type="ORF">N1210</name>
    <name type="ORF">N1838</name>
</gene>
<organism>
    <name type="scientific">Saccharomyces cerevisiae (strain ATCC 204508 / S288c)</name>
    <name type="common">Baker's yeast</name>
    <dbReference type="NCBI Taxonomy" id="559292"/>
    <lineage>
        <taxon>Eukaryota</taxon>
        <taxon>Fungi</taxon>
        <taxon>Dikarya</taxon>
        <taxon>Ascomycota</taxon>
        <taxon>Saccharomycotina</taxon>
        <taxon>Saccharomycetes</taxon>
        <taxon>Saccharomycetales</taxon>
        <taxon>Saccharomycetaceae</taxon>
        <taxon>Saccharomyces</taxon>
    </lineage>
</organism>
<evidence type="ECO:0000255" key="1">
    <source>
        <dbReference type="PROSITE-ProRule" id="PRU00659"/>
    </source>
</evidence>
<evidence type="ECO:0000256" key="2">
    <source>
        <dbReference type="SAM" id="MobiDB-lite"/>
    </source>
</evidence>
<evidence type="ECO:0000269" key="3">
    <source>
    </source>
</evidence>
<evidence type="ECO:0000269" key="4">
    <source>
    </source>
</evidence>
<evidence type="ECO:0000305" key="5"/>
<evidence type="ECO:0007744" key="6">
    <source>
    </source>
</evidence>
<evidence type="ECO:0007829" key="7">
    <source>
        <dbReference type="PDB" id="1K4Z"/>
    </source>
</evidence>
<reference key="1">
    <citation type="journal article" date="1990" name="Cell">
        <title>Cloning and characterization of CAP, the S. cerevisiae gene encoding the 70 kd adenylyl cyclase-associated protein.</title>
        <authorList>
            <person name="Field J."/>
            <person name="Vojtek A."/>
            <person name="Ballester R."/>
            <person name="Bolger G."/>
            <person name="Colicelli J."/>
            <person name="Ferguson K."/>
            <person name="Gerst J."/>
            <person name="Kataoka T."/>
            <person name="Michaeli T."/>
            <person name="Powers S."/>
            <person name="Riggs M."/>
            <person name="Rodgers L."/>
            <person name="Wieland I."/>
            <person name="Wheland B."/>
            <person name="Wigler M."/>
        </authorList>
    </citation>
    <scope>NUCLEOTIDE SEQUENCE [MRNA]</scope>
</reference>
<reference key="2">
    <citation type="journal article" date="1990" name="Cell">
        <title>SRV2, a gene required for RAS activation of adenylate cyclase in yeast.</title>
        <authorList>
            <person name="Fedor-Chaiken M."/>
            <person name="Deschenes R.J."/>
            <person name="Broach J.R."/>
        </authorList>
    </citation>
    <scope>NUCLEOTIDE SEQUENCE [GENOMIC DNA]</scope>
    <source>
        <strain>ATCC 204508 / S288c</strain>
    </source>
</reference>
<reference key="3">
    <citation type="journal article" date="1995" name="Yeast">
        <title>A 43.5 kb segment of yeast chromosome XIV, which contains MFA2, MEP2, CAP/SRV2, NAM9, FKB1/FPR1/RBP1, MOM22 and CPT1, predicts an adenosine deaminase gene and 14 new open reading frames.</title>
        <authorList>
            <person name="Mallet L."/>
            <person name="Bussereau F."/>
            <person name="Jacquet M."/>
        </authorList>
    </citation>
    <scope>NUCLEOTIDE SEQUENCE [GENOMIC DNA]</scope>
    <source>
        <strain>ATCC 204508 / S288c</strain>
    </source>
</reference>
<reference key="4">
    <citation type="journal article" date="1997" name="Nature">
        <title>The nucleotide sequence of Saccharomyces cerevisiae chromosome XIV and its evolutionary implications.</title>
        <authorList>
            <person name="Philippsen P."/>
            <person name="Kleine K."/>
            <person name="Poehlmann R."/>
            <person name="Duesterhoeft A."/>
            <person name="Hamberg K."/>
            <person name="Hegemann J.H."/>
            <person name="Obermaier B."/>
            <person name="Urrestarazu L.A."/>
            <person name="Aert R."/>
            <person name="Albermann K."/>
            <person name="Altmann R."/>
            <person name="Andre B."/>
            <person name="Baladron V."/>
            <person name="Ballesta J.P.G."/>
            <person name="Becam A.-M."/>
            <person name="Beinhauer J.D."/>
            <person name="Boskovic J."/>
            <person name="Buitrago M.J."/>
            <person name="Bussereau F."/>
            <person name="Coster F."/>
            <person name="Crouzet M."/>
            <person name="D'Angelo M."/>
            <person name="Dal Pero F."/>
            <person name="De Antoni A."/>
            <person name="del Rey F."/>
            <person name="Doignon F."/>
            <person name="Domdey H."/>
            <person name="Dubois E."/>
            <person name="Fiedler T.A."/>
            <person name="Fleig U."/>
            <person name="Floeth M."/>
            <person name="Fritz C."/>
            <person name="Gaillardin C."/>
            <person name="Garcia-Cantalejo J.M."/>
            <person name="Glansdorff N."/>
            <person name="Goffeau A."/>
            <person name="Gueldener U."/>
            <person name="Herbert C.J."/>
            <person name="Heumann K."/>
            <person name="Heuss-Neitzel D."/>
            <person name="Hilbert H."/>
            <person name="Hinni K."/>
            <person name="Iraqui Houssaini I."/>
            <person name="Jacquet M."/>
            <person name="Jimenez A."/>
            <person name="Jonniaux J.-L."/>
            <person name="Karpfinger-Hartl L."/>
            <person name="Lanfranchi G."/>
            <person name="Lepingle A."/>
            <person name="Levesque H."/>
            <person name="Lyck R."/>
            <person name="Maftahi M."/>
            <person name="Mallet L."/>
            <person name="Maurer C.T.C."/>
            <person name="Messenguy F."/>
            <person name="Mewes H.-W."/>
            <person name="Moestl D."/>
            <person name="Nasr F."/>
            <person name="Nicaud J.-M."/>
            <person name="Niedenthal R.K."/>
            <person name="Pandolfo D."/>
            <person name="Pierard A."/>
            <person name="Piravandi E."/>
            <person name="Planta R.J."/>
            <person name="Pohl T.M."/>
            <person name="Purnelle B."/>
            <person name="Rebischung C."/>
            <person name="Remacha M.A."/>
            <person name="Revuelta J.L."/>
            <person name="Rinke M."/>
            <person name="Saiz J.E."/>
            <person name="Sartorello F."/>
            <person name="Scherens B."/>
            <person name="Sen-Gupta M."/>
            <person name="Soler-Mira A."/>
            <person name="Urbanus J.H.M."/>
            <person name="Valle G."/>
            <person name="Van Dyck L."/>
            <person name="Verhasselt P."/>
            <person name="Vierendeels F."/>
            <person name="Vissers S."/>
            <person name="Voet M."/>
            <person name="Volckaert G."/>
            <person name="Wach A."/>
            <person name="Wambutt R."/>
            <person name="Wedler H."/>
            <person name="Zollner A."/>
            <person name="Hani J."/>
        </authorList>
    </citation>
    <scope>NUCLEOTIDE SEQUENCE [LARGE SCALE GENOMIC DNA]</scope>
    <source>
        <strain>ATCC 204508 / S288c</strain>
    </source>
</reference>
<reference key="5">
    <citation type="journal article" date="2014" name="G3 (Bethesda)">
        <title>The reference genome sequence of Saccharomyces cerevisiae: Then and now.</title>
        <authorList>
            <person name="Engel S.R."/>
            <person name="Dietrich F.S."/>
            <person name="Fisk D.G."/>
            <person name="Binkley G."/>
            <person name="Balakrishnan R."/>
            <person name="Costanzo M.C."/>
            <person name="Dwight S.S."/>
            <person name="Hitz B.C."/>
            <person name="Karra K."/>
            <person name="Nash R.S."/>
            <person name="Weng S."/>
            <person name="Wong E.D."/>
            <person name="Lloyd P."/>
            <person name="Skrzypek M.S."/>
            <person name="Miyasato S.R."/>
            <person name="Simison M."/>
            <person name="Cherry J.M."/>
        </authorList>
    </citation>
    <scope>GENOME REANNOTATION</scope>
    <source>
        <strain>ATCC 204508 / S288c</strain>
    </source>
</reference>
<reference key="6">
    <citation type="journal article" date="1996" name="Mol. Cell. Biol.">
        <title>A conserved proline-rich region of the Saccharomyces cerevisiae cyclase-associated protein binds SH3 domains and modulates cytoskeletal localization.</title>
        <authorList>
            <person name="Freeman N.L."/>
            <person name="Lila T."/>
            <person name="Mintzer K.A."/>
            <person name="Chen Z."/>
            <person name="Pahk A.J."/>
            <person name="Ren R."/>
            <person name="Drubin D.G."/>
            <person name="Field J."/>
        </authorList>
    </citation>
    <scope>INTERACTION WITH ABP1</scope>
    <scope>SUBCELLULAR LOCATION</scope>
</reference>
<reference key="7">
    <citation type="journal article" date="2003" name="Nature">
        <title>Global analysis of protein expression in yeast.</title>
        <authorList>
            <person name="Ghaemmaghami S."/>
            <person name="Huh W.-K."/>
            <person name="Bower K."/>
            <person name="Howson R.W."/>
            <person name="Belle A."/>
            <person name="Dephoure N."/>
            <person name="O'Shea E.K."/>
            <person name="Weissman J.S."/>
        </authorList>
    </citation>
    <scope>LEVEL OF PROTEIN EXPRESSION [LARGE SCALE ANALYSIS]</scope>
</reference>
<reference key="8">
    <citation type="journal article" date="2008" name="Mol. Cell. Proteomics">
        <title>A multidimensional chromatography technology for in-depth phosphoproteome analysis.</title>
        <authorList>
            <person name="Albuquerque C.P."/>
            <person name="Smolka M.B."/>
            <person name="Payne S.H."/>
            <person name="Bafna V."/>
            <person name="Eng J."/>
            <person name="Zhou H."/>
        </authorList>
    </citation>
    <scope>PHOSPHORYLATION [LARGE SCALE ANALYSIS] AT SER-454</scope>
    <scope>IDENTIFICATION BY MASS SPECTROMETRY [LARGE SCALE ANALYSIS]</scope>
</reference>
<reference key="9">
    <citation type="journal article" date="2009" name="Science">
        <title>Global analysis of Cdk1 substrate phosphorylation sites provides insights into evolution.</title>
        <authorList>
            <person name="Holt L.J."/>
            <person name="Tuch B.B."/>
            <person name="Villen J."/>
            <person name="Johnson A.D."/>
            <person name="Gygi S.P."/>
            <person name="Morgan D.O."/>
        </authorList>
    </citation>
    <scope>IDENTIFICATION BY MASS SPECTROMETRY [LARGE SCALE ANALYSIS]</scope>
</reference>
<reference key="10">
    <citation type="journal article" date="2012" name="Proc. Natl. Acad. Sci. U.S.A.">
        <title>N-terminal acetylome analyses and functional insights of the N-terminal acetyltransferase NatB.</title>
        <authorList>
            <person name="Van Damme P."/>
            <person name="Lasa M."/>
            <person name="Polevoda B."/>
            <person name="Gazquez C."/>
            <person name="Elosegui-Artola A."/>
            <person name="Kim D.S."/>
            <person name="De Juan-Pardo E."/>
            <person name="Demeyer K."/>
            <person name="Hole K."/>
            <person name="Larrea E."/>
            <person name="Timmerman E."/>
            <person name="Prieto J."/>
            <person name="Arnesen T."/>
            <person name="Sherman F."/>
            <person name="Gevaert K."/>
            <person name="Aldabe R."/>
        </authorList>
    </citation>
    <scope>IDENTIFICATION BY MASS SPECTROMETRY [LARGE SCALE ANALYSIS]</scope>
</reference>
<reference key="11">
    <citation type="journal article" date="2004" name="Biochemistry">
        <title>Crystal structure of the actin binding domain of the cyclase-associated protein.</title>
        <authorList>
            <person name="Dodatko T."/>
            <person name="Fedorov A.A."/>
            <person name="Grynberg M."/>
            <person name="Patskovsky Y."/>
            <person name="Rozwarski D.A."/>
            <person name="Jaroszewski L."/>
            <person name="Aronoff-Spencer E."/>
            <person name="Kondraskina E."/>
            <person name="Irving T."/>
            <person name="Godzik A."/>
            <person name="Almo S.C."/>
        </authorList>
    </citation>
    <scope>X-RAY CRYSTALLOGRAPHY (2.3 ANGSTROMS) OF 368-526</scope>
</reference>
<proteinExistence type="evidence at protein level"/>
<sequence>MPDSKYTMQGYNLVKLLKRLEEATARLEDVTIYQEGYIQNKLEASKNNKPSDSGADANTTNEPSAENAPEVEQDPKCITAFQSYIGENIDPLVELSGKIDTVVLDALQLLKGGFQSQLTFLRAAVRSRKPDYSSQTFADSLRPINENIIKLGQLKESNRQSKYFAYLSALSEGAPLFSWVAVDTPVSMVTDFKDAAQFWTNRILKEYRESDPNAVEWVKKFLASFDNLKAYIKEYHTTGVSWKKDGMDFADAMAQSTKNTGATSSPSPASATAAPAPPPPPPAPPASVFEISNDTPATSSDANKGGIGAVFAELNQGENITKGLKKVDKSQQTHKNPELRQSSTVSSTGSKSGPPPRPKKPSTLKTKRPPRKELVGNKWFIENYENETESLVIDANKDESIFIGKCSQVLVQIKGKVNAISLSETESCSVVLDSSISGMDVIKSNKFGIQVNHSLPQISIDKSDGGNIYLSKESLNTEIYTSCSTAINVNLPIGEDDDYVEFPIPEQMKHSFADGKFKSAVFEHAG</sequence>
<comment type="function">
    <text>The N-terminal domain binds to adenylyl cyclase, thereby enabling adenylyl cyclase to be activated by upstream regulatory signals, such as Ras. The C-terminal domain is required for normal cellular morphology and growth control.</text>
</comment>
<comment type="subunit">
    <text>Homodimer.</text>
</comment>
<comment type="interaction">
    <interactant intactId="EBI-4024">
        <id>P17555</id>
    </interactant>
    <interactant intactId="EBI-2036">
        <id>P15891</id>
        <label>ABP1</label>
    </interactant>
    <organismsDiffer>false</organismsDiffer>
    <experiments>9</experiments>
</comment>
<comment type="interaction">
    <interactant intactId="EBI-4024">
        <id>P17555</id>
    </interactant>
    <interactant intactId="EBI-2169">
        <id>P60010</id>
        <label>ACT1</label>
    </interactant>
    <organismsDiffer>false</organismsDiffer>
    <experiments>8</experiments>
</comment>
<comment type="interaction">
    <interactant intactId="EBI-4024">
        <id>P17555</id>
    </interactant>
    <interactant intactId="EBI-5364">
        <id>P08678</id>
        <label>CYR1</label>
    </interactant>
    <organismsDiffer>false</organismsDiffer>
    <experiments>6</experiments>
</comment>
<comment type="interaction">
    <interactant intactId="EBI-4024">
        <id>P17555</id>
    </interactant>
    <interactant intactId="EBI-15364">
        <id>P14126</id>
        <label>RPL3</label>
    </interactant>
    <organismsDiffer>false</organismsDiffer>
    <experiments>3</experiments>
</comment>
<comment type="interaction">
    <interactant intactId="EBI-4024">
        <id>P17555</id>
    </interactant>
    <interactant intactId="EBI-4024">
        <id>P17555</id>
        <label>SRV2</label>
    </interactant>
    <organismsDiffer>false</organismsDiffer>
    <experiments>3</experiments>
</comment>
<comment type="interaction">
    <interactant intactId="EBI-4024">
        <id>P17555</id>
    </interactant>
    <interactant intactId="EBI-6314">
        <id>P02994</id>
        <label>TEF2</label>
    </interactant>
    <organismsDiffer>false</organismsDiffer>
    <experiments>3</experiments>
</comment>
<comment type="interaction">
    <interactant intactId="EBI-4024">
        <id>P17555</id>
    </interactant>
    <interactant intactId="EBI-19663">
        <id>P53250</id>
        <label>TWF1</label>
    </interactant>
    <organismsDiffer>false</organismsDiffer>
    <experiments>3</experiments>
</comment>
<comment type="subcellular location">
    <subcellularLocation>
        <location evidence="4">Cytoplasm</location>
        <location evidence="4">Cytoskeleton</location>
        <location evidence="4">Actin patch</location>
    </subcellularLocation>
    <text>Cortical actin patches.</text>
</comment>
<comment type="miscellaneous">
    <text evidence="3">Present with 8760 molecules/cell in log phase SD medium.</text>
</comment>
<comment type="similarity">
    <text evidence="5">Belongs to the CAP family.</text>
</comment>
<accession>P17555</accession>
<accession>D6W144</accession>
<protein>
    <recommendedName>
        <fullName>Adenylyl cyclase-associated protein</fullName>
        <shortName>CAP</shortName>
    </recommendedName>
</protein>
<name>CAP_YEAST</name>
<keyword id="KW-0002">3D-structure</keyword>
<keyword id="KW-0009">Actin-binding</keyword>
<keyword id="KW-0963">Cytoplasm</keyword>
<keyword id="KW-0206">Cytoskeleton</keyword>
<keyword id="KW-0597">Phosphoprotein</keyword>
<keyword id="KW-1185">Reference proteome</keyword>
<dbReference type="EMBL" id="M58284">
    <property type="protein sequence ID" value="AAA63569.1"/>
    <property type="molecule type" value="mRNA"/>
</dbReference>
<dbReference type="EMBL" id="M32663">
    <property type="protein sequence ID" value="AAA35094.1"/>
    <property type="molecule type" value="Genomic_DNA"/>
</dbReference>
<dbReference type="EMBL" id="Z46843">
    <property type="protein sequence ID" value="CAA86887.1"/>
    <property type="molecule type" value="Genomic_DNA"/>
</dbReference>
<dbReference type="EMBL" id="Z71414">
    <property type="protein sequence ID" value="CAA96020.1"/>
    <property type="molecule type" value="Genomic_DNA"/>
</dbReference>
<dbReference type="EMBL" id="BK006947">
    <property type="protein sequence ID" value="DAA10410.1"/>
    <property type="molecule type" value="Genomic_DNA"/>
</dbReference>
<dbReference type="PIR" id="A34896">
    <property type="entry name" value="A34896"/>
</dbReference>
<dbReference type="RefSeq" id="NP_014261.1">
    <property type="nucleotide sequence ID" value="NM_001182976.1"/>
</dbReference>
<dbReference type="PDB" id="1K4Z">
    <property type="method" value="X-ray"/>
    <property type="resolution" value="2.30 A"/>
    <property type="chains" value="A/B=369-526"/>
</dbReference>
<dbReference type="PDB" id="1KQ5">
    <property type="method" value="X-ray"/>
    <property type="resolution" value="3.00 A"/>
    <property type="chains" value="A/B=369-526"/>
</dbReference>
<dbReference type="PDBsum" id="1K4Z"/>
<dbReference type="PDBsum" id="1KQ5"/>
<dbReference type="BMRB" id="P17555"/>
<dbReference type="SMR" id="P17555"/>
<dbReference type="BioGRID" id="35688">
    <property type="interactions" value="708"/>
</dbReference>
<dbReference type="ComplexPortal" id="CPX-695">
    <property type="entry name" value="Adenylyl cyclase complex"/>
</dbReference>
<dbReference type="DIP" id="DIP-77N"/>
<dbReference type="FunCoup" id="P17555">
    <property type="interactions" value="980"/>
</dbReference>
<dbReference type="IntAct" id="P17555">
    <property type="interactions" value="45"/>
</dbReference>
<dbReference type="MINT" id="P17555"/>
<dbReference type="STRING" id="4932.YNL138W"/>
<dbReference type="iPTMnet" id="P17555"/>
<dbReference type="PaxDb" id="4932-YNL138W"/>
<dbReference type="PeptideAtlas" id="P17555"/>
<dbReference type="EnsemblFungi" id="YNL138W_mRNA">
    <property type="protein sequence ID" value="YNL138W"/>
    <property type="gene ID" value="YNL138W"/>
</dbReference>
<dbReference type="GeneID" id="855584"/>
<dbReference type="KEGG" id="sce:YNL138W"/>
<dbReference type="AGR" id="SGD:S000005082"/>
<dbReference type="SGD" id="S000005082">
    <property type="gene designation" value="SRV2"/>
</dbReference>
<dbReference type="VEuPathDB" id="FungiDB:YNL138W"/>
<dbReference type="eggNOG" id="KOG2675">
    <property type="taxonomic scope" value="Eukaryota"/>
</dbReference>
<dbReference type="GeneTree" id="ENSGT00390000017955"/>
<dbReference type="HOGENOM" id="CLU_015780_1_0_1"/>
<dbReference type="InParanoid" id="P17555"/>
<dbReference type="OMA" id="KSQQTHK"/>
<dbReference type="OrthoDB" id="77251at2759"/>
<dbReference type="BioCyc" id="YEAST:G3O-33157-MONOMER"/>
<dbReference type="Reactome" id="R-SCE-6798695">
    <property type="pathway name" value="Neutrophil degranulation"/>
</dbReference>
<dbReference type="BioGRID-ORCS" id="855584">
    <property type="hits" value="10 hits in 10 CRISPR screens"/>
</dbReference>
<dbReference type="EvolutionaryTrace" id="P17555"/>
<dbReference type="PRO" id="PR:P17555"/>
<dbReference type="Proteomes" id="UP000002311">
    <property type="component" value="Chromosome XIV"/>
</dbReference>
<dbReference type="RNAct" id="P17555">
    <property type="molecule type" value="protein"/>
</dbReference>
<dbReference type="GO" id="GO:0030479">
    <property type="term" value="C:actin cortical patch"/>
    <property type="evidence" value="ECO:0000314"/>
    <property type="project" value="SGD"/>
</dbReference>
<dbReference type="GO" id="GO:0005737">
    <property type="term" value="C:cytoplasm"/>
    <property type="evidence" value="ECO:0000318"/>
    <property type="project" value="GO_Central"/>
</dbReference>
<dbReference type="GO" id="GO:0043332">
    <property type="term" value="C:mating projection tip"/>
    <property type="evidence" value="ECO:0007005"/>
    <property type="project" value="SGD"/>
</dbReference>
<dbReference type="GO" id="GO:0003779">
    <property type="term" value="F:actin binding"/>
    <property type="evidence" value="ECO:0000314"/>
    <property type="project" value="SGD"/>
</dbReference>
<dbReference type="GO" id="GO:0008179">
    <property type="term" value="F:adenylate cyclase binding"/>
    <property type="evidence" value="ECO:0000314"/>
    <property type="project" value="SGD"/>
</dbReference>
<dbReference type="GO" id="GO:0042802">
    <property type="term" value="F:identical protein binding"/>
    <property type="evidence" value="ECO:0000353"/>
    <property type="project" value="IntAct"/>
</dbReference>
<dbReference type="GO" id="GO:0030042">
    <property type="term" value="P:actin filament depolymerization"/>
    <property type="evidence" value="ECO:0000314"/>
    <property type="project" value="SGD"/>
</dbReference>
<dbReference type="GO" id="GO:0007015">
    <property type="term" value="P:actin filament organization"/>
    <property type="evidence" value="ECO:0000314"/>
    <property type="project" value="SGD"/>
</dbReference>
<dbReference type="GO" id="GO:0051014">
    <property type="term" value="P:actin filament severing"/>
    <property type="evidence" value="ECO:0000314"/>
    <property type="project" value="SGD"/>
</dbReference>
<dbReference type="GO" id="GO:0019933">
    <property type="term" value="P:cAMP-mediated signaling"/>
    <property type="evidence" value="ECO:0000318"/>
    <property type="project" value="GO_Central"/>
</dbReference>
<dbReference type="GO" id="GO:0030836">
    <property type="term" value="P:positive regulation of actin filament depolymerization"/>
    <property type="evidence" value="ECO:0000314"/>
    <property type="project" value="SGD"/>
</dbReference>
<dbReference type="GO" id="GO:0090141">
    <property type="term" value="P:positive regulation of mitochondrial fission"/>
    <property type="evidence" value="ECO:0000315"/>
    <property type="project" value="SGD"/>
</dbReference>
<dbReference type="GO" id="GO:0046579">
    <property type="term" value="P:positive regulation of Ras protein signal transduction"/>
    <property type="evidence" value="ECO:0000314"/>
    <property type="project" value="ComplexPortal"/>
</dbReference>
<dbReference type="GO" id="GO:0007265">
    <property type="term" value="P:Ras protein signal transduction"/>
    <property type="evidence" value="ECO:0000315"/>
    <property type="project" value="SGD"/>
</dbReference>
<dbReference type="GO" id="GO:0030833">
    <property type="term" value="P:regulation of actin filament polymerization"/>
    <property type="evidence" value="ECO:0000315"/>
    <property type="project" value="SGD"/>
</dbReference>
<dbReference type="FunFam" id="1.25.40.330:FF:000001">
    <property type="entry name" value="Adenylyl cyclase-associated protein"/>
    <property type="match status" value="1"/>
</dbReference>
<dbReference type="FunFam" id="2.160.20.70:FF:000008">
    <property type="entry name" value="Adenylyl cyclase-associated protein"/>
    <property type="match status" value="1"/>
</dbReference>
<dbReference type="Gene3D" id="2.160.20.70">
    <property type="match status" value="1"/>
</dbReference>
<dbReference type="Gene3D" id="1.25.40.330">
    <property type="entry name" value="Adenylate cyclase-associated CAP, N-terminal domain"/>
    <property type="match status" value="1"/>
</dbReference>
<dbReference type="InterPro" id="IPR001837">
    <property type="entry name" value="Adenylate_cyclase-assoc_CAP"/>
</dbReference>
<dbReference type="InterPro" id="IPR013912">
    <property type="entry name" value="Adenylate_cyclase-assoc_CAP_C"/>
</dbReference>
<dbReference type="InterPro" id="IPR013992">
    <property type="entry name" value="Adenylate_cyclase-assoc_CAP_N"/>
</dbReference>
<dbReference type="InterPro" id="IPR017901">
    <property type="entry name" value="C-CAP_CF_C-like"/>
</dbReference>
<dbReference type="InterPro" id="IPR016098">
    <property type="entry name" value="CAP/MinC_C"/>
</dbReference>
<dbReference type="InterPro" id="IPR036223">
    <property type="entry name" value="CAP_C_sf"/>
</dbReference>
<dbReference type="InterPro" id="IPR028417">
    <property type="entry name" value="CAP_CS_C"/>
</dbReference>
<dbReference type="InterPro" id="IPR018106">
    <property type="entry name" value="CAP_CS_N"/>
</dbReference>
<dbReference type="InterPro" id="IPR053950">
    <property type="entry name" value="CAP_N"/>
</dbReference>
<dbReference type="InterPro" id="IPR036222">
    <property type="entry name" value="CAP_N_sf"/>
</dbReference>
<dbReference type="InterPro" id="IPR006599">
    <property type="entry name" value="CARP_motif"/>
</dbReference>
<dbReference type="PANTHER" id="PTHR10652">
    <property type="entry name" value="ADENYLYL CYCLASE-ASSOCIATED PROTEIN"/>
    <property type="match status" value="1"/>
</dbReference>
<dbReference type="PANTHER" id="PTHR10652:SF0">
    <property type="entry name" value="ADENYLYL CYCLASE-ASSOCIATED PROTEIN"/>
    <property type="match status" value="1"/>
</dbReference>
<dbReference type="Pfam" id="PF08603">
    <property type="entry name" value="CAP_C"/>
    <property type="match status" value="1"/>
</dbReference>
<dbReference type="Pfam" id="PF21938">
    <property type="entry name" value="CAP_N"/>
    <property type="match status" value="1"/>
</dbReference>
<dbReference type="Pfam" id="PF01213">
    <property type="entry name" value="CAP_N-CM"/>
    <property type="match status" value="1"/>
</dbReference>
<dbReference type="SMART" id="SM00673">
    <property type="entry name" value="CARP"/>
    <property type="match status" value="2"/>
</dbReference>
<dbReference type="SUPFAM" id="SSF69340">
    <property type="entry name" value="C-terminal domain of adenylylcyclase associated protein"/>
    <property type="match status" value="1"/>
</dbReference>
<dbReference type="SUPFAM" id="SSF101278">
    <property type="entry name" value="N-terminal domain of adenylylcyclase associated protein, CAP"/>
    <property type="match status" value="1"/>
</dbReference>
<dbReference type="PROSITE" id="PS51329">
    <property type="entry name" value="C_CAP_COFACTOR_C"/>
    <property type="match status" value="1"/>
</dbReference>
<dbReference type="PROSITE" id="PS01088">
    <property type="entry name" value="CAP_1"/>
    <property type="match status" value="1"/>
</dbReference>
<dbReference type="PROSITE" id="PS01089">
    <property type="entry name" value="CAP_2"/>
    <property type="match status" value="1"/>
</dbReference>
<feature type="chain" id="PRO_0000205706" description="Adenylyl cyclase-associated protein">
    <location>
        <begin position="1"/>
        <end position="526"/>
    </location>
</feature>
<feature type="domain" description="C-CAP/cofactor C-like" evidence="1">
    <location>
        <begin position="369"/>
        <end position="504"/>
    </location>
</feature>
<feature type="region of interest" description="Adenyl cyclase-binding">
    <location>
        <begin position="1"/>
        <end position="168"/>
    </location>
</feature>
<feature type="region of interest" description="Disordered" evidence="2">
    <location>
        <begin position="43"/>
        <end position="72"/>
    </location>
</feature>
<feature type="region of interest" description="Disordered" evidence="2">
    <location>
        <begin position="255"/>
        <end position="304"/>
    </location>
</feature>
<feature type="region of interest" description="Disordered" evidence="2">
    <location>
        <begin position="326"/>
        <end position="371"/>
    </location>
</feature>
<feature type="region of interest" description="Interaction with SH3 domain of ABP1">
    <location>
        <begin position="354"/>
        <end position="361"/>
    </location>
</feature>
<feature type="region of interest" description="Dimerization and actin-binding">
    <location>
        <begin position="370"/>
        <end position="526"/>
    </location>
</feature>
<feature type="short sequence motif" description="SH3-binding">
    <location>
        <begin position="169"/>
        <end position="369"/>
    </location>
</feature>
<feature type="compositionally biased region" description="Polar residues" evidence="2">
    <location>
        <begin position="45"/>
        <end position="64"/>
    </location>
</feature>
<feature type="compositionally biased region" description="Low complexity" evidence="2">
    <location>
        <begin position="262"/>
        <end position="274"/>
    </location>
</feature>
<feature type="compositionally biased region" description="Pro residues" evidence="2">
    <location>
        <begin position="275"/>
        <end position="285"/>
    </location>
</feature>
<feature type="compositionally biased region" description="Polar residues" evidence="2">
    <location>
        <begin position="290"/>
        <end position="302"/>
    </location>
</feature>
<feature type="compositionally biased region" description="Basic and acidic residues" evidence="2">
    <location>
        <begin position="326"/>
        <end position="338"/>
    </location>
</feature>
<feature type="compositionally biased region" description="Low complexity" evidence="2">
    <location>
        <begin position="342"/>
        <end position="352"/>
    </location>
</feature>
<feature type="compositionally biased region" description="Basic residues" evidence="2">
    <location>
        <begin position="357"/>
        <end position="370"/>
    </location>
</feature>
<feature type="modified residue" description="Phosphoserine" evidence="6">
    <location>
        <position position="454"/>
    </location>
</feature>
<feature type="strand" evidence="7">
    <location>
        <begin position="371"/>
        <end position="375"/>
    </location>
</feature>
<feature type="strand" evidence="7">
    <location>
        <begin position="378"/>
        <end position="382"/>
    </location>
</feature>
<feature type="strand" evidence="7">
    <location>
        <begin position="391"/>
        <end position="394"/>
    </location>
</feature>
<feature type="strand" evidence="7">
    <location>
        <begin position="400"/>
        <end position="415"/>
    </location>
</feature>
<feature type="strand" evidence="7">
    <location>
        <begin position="417"/>
        <end position="433"/>
    </location>
</feature>
<feature type="strand" evidence="7">
    <location>
        <begin position="435"/>
        <end position="437"/>
    </location>
</feature>
<feature type="strand" evidence="7">
    <location>
        <begin position="439"/>
        <end position="453"/>
    </location>
</feature>
<feature type="strand" evidence="7">
    <location>
        <begin position="456"/>
        <end position="462"/>
    </location>
</feature>
<feature type="strand" evidence="7">
    <location>
        <begin position="464"/>
        <end position="469"/>
    </location>
</feature>
<feature type="turn" evidence="7">
    <location>
        <begin position="473"/>
        <end position="476"/>
    </location>
</feature>
<feature type="strand" evidence="7">
    <location>
        <begin position="478"/>
        <end position="483"/>
    </location>
</feature>
<feature type="strand" evidence="7">
    <location>
        <begin position="485"/>
        <end position="492"/>
    </location>
</feature>
<feature type="helix" evidence="7">
    <location>
        <begin position="495"/>
        <end position="497"/>
    </location>
</feature>
<feature type="strand" evidence="7">
    <location>
        <begin position="500"/>
        <end position="503"/>
    </location>
</feature>
<feature type="strand" evidence="7">
    <location>
        <begin position="508"/>
        <end position="513"/>
    </location>
</feature>
<feature type="strand" evidence="7">
    <location>
        <begin position="516"/>
        <end position="521"/>
    </location>
</feature>